<name>RS6_STRGC</name>
<accession>A8AZD7</accession>
<evidence type="ECO:0000255" key="1">
    <source>
        <dbReference type="HAMAP-Rule" id="MF_00360"/>
    </source>
</evidence>
<evidence type="ECO:0000305" key="2"/>
<feature type="chain" id="PRO_1000079473" description="Small ribosomal subunit protein bS6">
    <location>
        <begin position="1"/>
        <end position="96"/>
    </location>
</feature>
<comment type="function">
    <text evidence="1">Binds together with bS18 to 16S ribosomal RNA.</text>
</comment>
<comment type="similarity">
    <text evidence="1">Belongs to the bacterial ribosomal protein bS6 family.</text>
</comment>
<keyword id="KW-1185">Reference proteome</keyword>
<keyword id="KW-0687">Ribonucleoprotein</keyword>
<keyword id="KW-0689">Ribosomal protein</keyword>
<keyword id="KW-0694">RNA-binding</keyword>
<keyword id="KW-0699">rRNA-binding</keyword>
<proteinExistence type="inferred from homology"/>
<gene>
    <name evidence="1" type="primary">rpsF</name>
    <name type="ordered locus">SGO_1881</name>
</gene>
<dbReference type="EMBL" id="CP000725">
    <property type="protein sequence ID" value="ABV09337.1"/>
    <property type="molecule type" value="Genomic_DNA"/>
</dbReference>
<dbReference type="RefSeq" id="WP_001151775.1">
    <property type="nucleotide sequence ID" value="NC_009785.1"/>
</dbReference>
<dbReference type="SMR" id="A8AZD7"/>
<dbReference type="STRING" id="467705.SGO_1881"/>
<dbReference type="KEGG" id="sgo:SGO_1881"/>
<dbReference type="eggNOG" id="COG0360">
    <property type="taxonomic scope" value="Bacteria"/>
</dbReference>
<dbReference type="HOGENOM" id="CLU_113441_5_3_9"/>
<dbReference type="Proteomes" id="UP000001131">
    <property type="component" value="Chromosome"/>
</dbReference>
<dbReference type="GO" id="GO:0005737">
    <property type="term" value="C:cytoplasm"/>
    <property type="evidence" value="ECO:0007669"/>
    <property type="project" value="UniProtKB-ARBA"/>
</dbReference>
<dbReference type="GO" id="GO:1990904">
    <property type="term" value="C:ribonucleoprotein complex"/>
    <property type="evidence" value="ECO:0007669"/>
    <property type="project" value="UniProtKB-KW"/>
</dbReference>
<dbReference type="GO" id="GO:0005840">
    <property type="term" value="C:ribosome"/>
    <property type="evidence" value="ECO:0007669"/>
    <property type="project" value="UniProtKB-KW"/>
</dbReference>
<dbReference type="GO" id="GO:0070181">
    <property type="term" value="F:small ribosomal subunit rRNA binding"/>
    <property type="evidence" value="ECO:0007669"/>
    <property type="project" value="TreeGrafter"/>
</dbReference>
<dbReference type="GO" id="GO:0003735">
    <property type="term" value="F:structural constituent of ribosome"/>
    <property type="evidence" value="ECO:0007669"/>
    <property type="project" value="InterPro"/>
</dbReference>
<dbReference type="GO" id="GO:0006412">
    <property type="term" value="P:translation"/>
    <property type="evidence" value="ECO:0007669"/>
    <property type="project" value="UniProtKB-UniRule"/>
</dbReference>
<dbReference type="CDD" id="cd00473">
    <property type="entry name" value="bS6"/>
    <property type="match status" value="1"/>
</dbReference>
<dbReference type="FunFam" id="3.30.70.60:FF:000002">
    <property type="entry name" value="30S ribosomal protein S6"/>
    <property type="match status" value="1"/>
</dbReference>
<dbReference type="Gene3D" id="3.30.70.60">
    <property type="match status" value="1"/>
</dbReference>
<dbReference type="HAMAP" id="MF_00360">
    <property type="entry name" value="Ribosomal_bS6"/>
    <property type="match status" value="1"/>
</dbReference>
<dbReference type="InterPro" id="IPR000529">
    <property type="entry name" value="Ribosomal_bS6"/>
</dbReference>
<dbReference type="InterPro" id="IPR035980">
    <property type="entry name" value="Ribosomal_bS6_sf"/>
</dbReference>
<dbReference type="InterPro" id="IPR020814">
    <property type="entry name" value="Ribosomal_S6_plastid/chlpt"/>
</dbReference>
<dbReference type="InterPro" id="IPR014717">
    <property type="entry name" value="Transl_elong_EF1B/ribsomal_bS6"/>
</dbReference>
<dbReference type="NCBIfam" id="TIGR00166">
    <property type="entry name" value="S6"/>
    <property type="match status" value="1"/>
</dbReference>
<dbReference type="PANTHER" id="PTHR21011">
    <property type="entry name" value="MITOCHONDRIAL 28S RIBOSOMAL PROTEIN S6"/>
    <property type="match status" value="1"/>
</dbReference>
<dbReference type="PANTHER" id="PTHR21011:SF1">
    <property type="entry name" value="SMALL RIBOSOMAL SUBUNIT PROTEIN BS6M"/>
    <property type="match status" value="1"/>
</dbReference>
<dbReference type="Pfam" id="PF01250">
    <property type="entry name" value="Ribosomal_S6"/>
    <property type="match status" value="1"/>
</dbReference>
<dbReference type="SUPFAM" id="SSF54995">
    <property type="entry name" value="Ribosomal protein S6"/>
    <property type="match status" value="1"/>
</dbReference>
<reference key="1">
    <citation type="journal article" date="2007" name="J. Bacteriol.">
        <title>Genome-wide transcriptional changes in Streptococcus gordonii in response to competence signaling peptide.</title>
        <authorList>
            <person name="Vickerman M.M."/>
            <person name="Iobst S."/>
            <person name="Jesionowski A.M."/>
            <person name="Gill S.R."/>
        </authorList>
    </citation>
    <scope>NUCLEOTIDE SEQUENCE [LARGE SCALE GENOMIC DNA]</scope>
    <source>
        <strain>Challis / ATCC 35105 / BCRC 15272 / CH1 / DL1 / V288</strain>
    </source>
</reference>
<organism>
    <name type="scientific">Streptococcus gordonii (strain Challis / ATCC 35105 / BCRC 15272 / CH1 / DL1 / V288)</name>
    <dbReference type="NCBI Taxonomy" id="467705"/>
    <lineage>
        <taxon>Bacteria</taxon>
        <taxon>Bacillati</taxon>
        <taxon>Bacillota</taxon>
        <taxon>Bacilli</taxon>
        <taxon>Lactobacillales</taxon>
        <taxon>Streptococcaceae</taxon>
        <taxon>Streptococcus</taxon>
    </lineage>
</organism>
<protein>
    <recommendedName>
        <fullName evidence="1">Small ribosomal subunit protein bS6</fullName>
    </recommendedName>
    <alternativeName>
        <fullName evidence="2">30S ribosomal protein S6</fullName>
    </alternativeName>
</protein>
<sequence length="96" mass="11195">MAKYEILYIIRPNIEEEAKNALVARFDSILTDNGATVVESKDWEKRRLAYEIQDFREGLYHIVNVEANDDVALKEFDRLSKINADILRHMIVKLDA</sequence>